<reference key="1">
    <citation type="journal article" date="1991" name="Mol. Microbiol.">
        <title>Organization of the fimbrial gene region of Bacteroides nodosus: class I and class II strains.</title>
        <authorList>
            <person name="Hobbs M."/>
            <person name="Dalrymple B.P."/>
            <person name="Cox P.T."/>
            <person name="Livingstone S.P."/>
            <person name="Delaney S.F."/>
            <person name="Mattick J.S."/>
        </authorList>
    </citation>
    <scope>NUCLEOTIDE SEQUENCE [GENOMIC DNA]</scope>
    <source>
        <strain>Serogroup I isolate VCS1636</strain>
    </source>
</reference>
<sequence>MNKQRFLFAAKISGIHFLLSLTVAALLAGLIFFVWYPFPYQKIMGSFKLFFLIFGIDVCCGPLLTFILSNPQKRLKECIIDFSLIIFIQLSAFIYGMYNIYLARPVAVVFELDRIRVLSKGDILLDELPQALPEFRQFPYFGHHLLAVRDWKNAEERKEGVEKAFQGFDIAQQPTLWVAYSSELEKIRKAAKPLAQSFLKLNAKQQQDVKTALQKAHLNLEEAFFLPLVSNRSMEWMVILDKNMNITTAVEIDAFEL</sequence>
<protein>
    <recommendedName>
        <fullName>Fimbrial assembly protein, serogroup I</fullName>
    </recommendedName>
</protein>
<dbReference type="EMBL" id="X52410">
    <property type="protein sequence ID" value="CAA36663.1"/>
    <property type="molecule type" value="Genomic_DNA"/>
</dbReference>
<dbReference type="PIR" id="S15247">
    <property type="entry name" value="YQBZBI"/>
</dbReference>
<dbReference type="InterPro" id="IPR047814">
    <property type="entry name" value="TfpX/TfpZ-like"/>
</dbReference>
<dbReference type="NCBIfam" id="NF041437">
    <property type="entry name" value="TfpZ"/>
    <property type="match status" value="1"/>
</dbReference>
<accession>P17834</accession>
<keyword id="KW-1029">Fimbrium biogenesis</keyword>
<organism>
    <name type="scientific">Dichelobacter nodosus</name>
    <name type="common">Bacteroides nodosus</name>
    <dbReference type="NCBI Taxonomy" id="870"/>
    <lineage>
        <taxon>Bacteria</taxon>
        <taxon>Pseudomonadati</taxon>
        <taxon>Pseudomonadota</taxon>
        <taxon>Gammaproteobacteria</taxon>
        <taxon>Cardiobacteriales</taxon>
        <taxon>Cardiobacteriaceae</taxon>
        <taxon>Dichelobacter</taxon>
    </lineage>
</organism>
<feature type="chain" id="PRO_0000087249" description="Fimbrial assembly protein, serogroup I">
    <location>
        <begin position="1"/>
        <end position="257"/>
    </location>
</feature>
<name>FIMBI_DICNO</name>
<proteinExistence type="predicted"/>
<gene>
    <name type="primary">fimB</name>
</gene>